<accession>P69244</accession>
<accession>P11105</accession>
<feature type="initiator methionine" description="Removed" evidence="3">
    <location>
        <position position="1"/>
    </location>
</feature>
<feature type="chain" id="PRO_0000221285" description="Histone H3.3">
    <location>
        <begin position="2"/>
        <end position="136"/>
    </location>
</feature>
<feature type="region of interest" description="Disordered" evidence="2">
    <location>
        <begin position="1"/>
        <end position="43"/>
    </location>
</feature>
<feature type="site" description="Not N6-acetylated" evidence="3">
    <location>
        <position position="37"/>
    </location>
</feature>
<feature type="site" description="Not N6-methylated" evidence="3">
    <location>
        <position position="37"/>
    </location>
</feature>
<feature type="site" description="Not N6-acetylated" evidence="3">
    <location>
        <position position="38"/>
    </location>
</feature>
<feature type="site" description="Not N6-methylated" evidence="3">
    <location>
        <position position="38"/>
    </location>
</feature>
<feature type="modified residue" description="N6,N6,N6-trimethyllysine; alternate" evidence="3">
    <location>
        <position position="5"/>
    </location>
</feature>
<feature type="modified residue" description="N6,N6-dimethyllysine; alternate" evidence="3">
    <location>
        <position position="5"/>
    </location>
</feature>
<feature type="modified residue" description="N6-methyllysine; alternate" evidence="3">
    <location>
        <position position="5"/>
    </location>
</feature>
<feature type="modified residue" description="N6,N6,N6-trimethyllysine; alternate" evidence="3">
    <location>
        <position position="10"/>
    </location>
</feature>
<feature type="modified residue" description="N6,N6-dimethyllysine; alternate" evidence="3">
    <location>
        <position position="10"/>
    </location>
</feature>
<feature type="modified residue" description="N6-acetyllysine; alternate" evidence="3">
    <location>
        <position position="10"/>
    </location>
</feature>
<feature type="modified residue" description="N6-methyllysine; alternate" evidence="3">
    <location>
        <position position="10"/>
    </location>
</feature>
<feature type="modified residue" description="Phosphoserine" evidence="1">
    <location>
        <position position="11"/>
    </location>
</feature>
<feature type="modified residue" description="Phosphothreonine" evidence="1">
    <location>
        <position position="12"/>
    </location>
</feature>
<feature type="modified residue" description="N6,N6,N6-trimethyllysine; alternate" evidence="3">
    <location>
        <position position="15"/>
    </location>
</feature>
<feature type="modified residue" description="N6-acetyllysine; alternate" evidence="3">
    <location>
        <position position="15"/>
    </location>
</feature>
<feature type="modified residue" description="N6,N6,N6-trimethyllysine; alternate" evidence="3">
    <location>
        <position position="19"/>
    </location>
</feature>
<feature type="modified residue" description="N6-acetyllysine; alternate" evidence="3">
    <location>
        <position position="19"/>
    </location>
</feature>
<feature type="modified residue" description="N6,N6,N6-trimethyllysine; alternate" evidence="3">
    <location>
        <position position="24"/>
    </location>
</feature>
<feature type="modified residue" description="N6-acetyllysine; alternate" evidence="3">
    <location>
        <position position="24"/>
    </location>
</feature>
<feature type="modified residue" description="N6,N6,N6-trimethyllysine; alternate" evidence="3">
    <location>
        <position position="28"/>
    </location>
</feature>
<feature type="modified residue" description="N6,N6-dimethyllysine; alternate" evidence="3">
    <location>
        <position position="28"/>
    </location>
</feature>
<feature type="modified residue" description="N6-acetyllysine; alternate" evidence="3">
    <location>
        <position position="28"/>
    </location>
</feature>
<feature type="modified residue" description="N6-methyllysine; alternate" evidence="3">
    <location>
        <position position="28"/>
    </location>
</feature>
<feature type="modified residue" description="Phosphoserine" evidence="1">
    <location>
        <position position="29"/>
    </location>
</feature>
<evidence type="ECO:0000250" key="1"/>
<evidence type="ECO:0000256" key="2">
    <source>
        <dbReference type="SAM" id="MobiDB-lite"/>
    </source>
</evidence>
<evidence type="ECO:0000269" key="3">
    <source>
    </source>
</evidence>
<evidence type="ECO:0000305" key="4"/>
<protein>
    <recommendedName>
        <fullName>Histone H3.3</fullName>
    </recommendedName>
    <alternativeName>
        <fullName>Histone H3.2</fullName>
    </alternativeName>
    <alternativeName>
        <fullName>Minor histone H3</fullName>
    </alternativeName>
</protein>
<name>H33_MEDSA</name>
<sequence>MARTKQTARKSTGGKAPRKQLATKAARKSAPTTGGVKKPHRYRPGTVALREIRKYQKSTELLIRKLPFQRLVREIAQDFKTDLRFQSHAVLALQEAAEAYLVGLFEDTNLCAIHAKRVTIMPKDIQLARRIRGERA</sequence>
<proteinExistence type="evidence at protein level"/>
<reference key="1">
    <citation type="thesis" date="1994" institute="University of Missouri / Kansas City" country="United States">
        <title>Histone H3 genes in alfalfa.</title>
        <authorList>
            <person name="Robertson A.J."/>
        </authorList>
    </citation>
    <scope>NUCLEOTIDE SEQUENCE [GENOMIC DNA / MRNA]</scope>
    <source>
        <strain>cv. Chief</strain>
        <strain>cv. Regen S</strain>
    </source>
</reference>
<reference key="2">
    <citation type="journal article" date="1989" name="Nucleic Acids Res.">
        <title>Polyadenylated H3 histone transcripts and H3 histone variants in alfalfa.</title>
        <authorList>
            <person name="Wu S.C."/>
            <person name="Gyoergyey J."/>
            <person name="Dudits D."/>
        </authorList>
    </citation>
    <scope>NUCLEOTIDE SEQUENCE [MRNA] OF 18-136</scope>
    <source>
        <strain>cv. Regen S</strain>
    </source>
</reference>
<reference key="3">
    <citation type="journal article" date="1987" name="Arch. Biochem. Biophys.">
        <title>Histone variants and acetylated species from the alfalfa plant Medicago sativa.</title>
        <authorList>
            <person name="Waterborg J.H."/>
            <person name="Winicov I."/>
            <person name="Harrington R.E."/>
        </authorList>
    </citation>
    <scope>ACETYLATION</scope>
</reference>
<reference key="4">
    <citation type="journal article" date="1989" name="Plant Physiol.">
        <title>Differential histone acetylation in alfalfa (Medicago sativa) due to growth in NaCl: responses in salt stressed and salt tolerant callus cultures.</title>
        <authorList>
            <person name="Waterborg J.H."/>
            <person name="Harrington R.E."/>
            <person name="Winicov I."/>
        </authorList>
    </citation>
    <scope>ACETYLATION</scope>
    <scope>LACK OF PHOSPHORYLATION</scope>
</reference>
<reference key="5">
    <citation type="journal article" date="1990" name="J. Biol. Chem.">
        <title>Sequence analysis of acetylation and methylation in two histone H3 variants of alfalfa.</title>
        <authorList>
            <person name="Waterborg J.H."/>
        </authorList>
    </citation>
    <scope>PROTEIN SEQUENCE OF 2-52 AND 85-95</scope>
    <scope>ACETYLATION AT LYS-10; LYS-15; LYS-19; LYS-24 AND LYS-28</scope>
    <scope>LACK OF ACETYLATION AT LYS-37 AND LYS-38</scope>
    <scope>METHYLATION AT LYS-5; LYS-10; LYS-15; LYS-19; LYS-24 AND LYS-28</scope>
    <scope>LACK OF METHYLATION AT LYS-37 AND LYS-38</scope>
    <source>
        <strain>cv. R4</strain>
    </source>
</reference>
<keyword id="KW-0007">Acetylation</keyword>
<keyword id="KW-0158">Chromosome</keyword>
<keyword id="KW-0903">Direct protein sequencing</keyword>
<keyword id="KW-0238">DNA-binding</keyword>
<keyword id="KW-0488">Methylation</keyword>
<keyword id="KW-0544">Nucleosome core</keyword>
<keyword id="KW-0539">Nucleus</keyword>
<keyword id="KW-0597">Phosphoprotein</keyword>
<dbReference type="EMBL" id="U09458">
    <property type="protein sequence ID" value="AAB49538.1"/>
    <property type="molecule type" value="Unassigned_DNA"/>
</dbReference>
<dbReference type="EMBL" id="U09460">
    <property type="protein sequence ID" value="AAB36493.1"/>
    <property type="molecule type" value="mRNA"/>
</dbReference>
<dbReference type="EMBL" id="U09461">
    <property type="protein sequence ID" value="AAB36494.1"/>
    <property type="molecule type" value="mRNA"/>
</dbReference>
<dbReference type="EMBL" id="U09464">
    <property type="protein sequence ID" value="AAB36497.1"/>
    <property type="molecule type" value="mRNA"/>
</dbReference>
<dbReference type="EMBL" id="U09465">
    <property type="protein sequence ID" value="AAB36498.1"/>
    <property type="molecule type" value="mRNA"/>
</dbReference>
<dbReference type="EMBL" id="X13676">
    <property type="protein sequence ID" value="CAA31967.1"/>
    <property type="molecule type" value="mRNA"/>
</dbReference>
<dbReference type="PIR" id="B38309">
    <property type="entry name" value="B38309"/>
</dbReference>
<dbReference type="PIR" id="S04521">
    <property type="entry name" value="S04521"/>
</dbReference>
<dbReference type="SMR" id="P69244"/>
<dbReference type="iPTMnet" id="P69244"/>
<dbReference type="GO" id="GO:0000786">
    <property type="term" value="C:nucleosome"/>
    <property type="evidence" value="ECO:0007669"/>
    <property type="project" value="UniProtKB-KW"/>
</dbReference>
<dbReference type="GO" id="GO:0005634">
    <property type="term" value="C:nucleus"/>
    <property type="evidence" value="ECO:0007669"/>
    <property type="project" value="UniProtKB-SubCell"/>
</dbReference>
<dbReference type="GO" id="GO:0003677">
    <property type="term" value="F:DNA binding"/>
    <property type="evidence" value="ECO:0007669"/>
    <property type="project" value="UniProtKB-KW"/>
</dbReference>
<dbReference type="GO" id="GO:0046982">
    <property type="term" value="F:protein heterodimerization activity"/>
    <property type="evidence" value="ECO:0007669"/>
    <property type="project" value="InterPro"/>
</dbReference>
<dbReference type="GO" id="GO:0030527">
    <property type="term" value="F:structural constituent of chromatin"/>
    <property type="evidence" value="ECO:0007669"/>
    <property type="project" value="InterPro"/>
</dbReference>
<dbReference type="CDD" id="cd22911">
    <property type="entry name" value="HFD_H3"/>
    <property type="match status" value="1"/>
</dbReference>
<dbReference type="FunFam" id="1.10.20.10:FF:000078">
    <property type="entry name" value="Histone H3"/>
    <property type="match status" value="1"/>
</dbReference>
<dbReference type="FunFam" id="1.10.20.10:FF:000044">
    <property type="entry name" value="Histone H3.3"/>
    <property type="match status" value="1"/>
</dbReference>
<dbReference type="Gene3D" id="1.10.20.10">
    <property type="entry name" value="Histone, subunit A"/>
    <property type="match status" value="1"/>
</dbReference>
<dbReference type="InterPro" id="IPR009072">
    <property type="entry name" value="Histone-fold"/>
</dbReference>
<dbReference type="InterPro" id="IPR007125">
    <property type="entry name" value="Histone_H2A/H2B/H3"/>
</dbReference>
<dbReference type="InterPro" id="IPR000164">
    <property type="entry name" value="Histone_H3/CENP-A"/>
</dbReference>
<dbReference type="PANTHER" id="PTHR11426">
    <property type="entry name" value="HISTONE H3"/>
    <property type="match status" value="1"/>
</dbReference>
<dbReference type="Pfam" id="PF00125">
    <property type="entry name" value="Histone"/>
    <property type="match status" value="1"/>
</dbReference>
<dbReference type="PRINTS" id="PR00622">
    <property type="entry name" value="HISTONEH3"/>
</dbReference>
<dbReference type="SMART" id="SM00428">
    <property type="entry name" value="H3"/>
    <property type="match status" value="1"/>
</dbReference>
<dbReference type="SUPFAM" id="SSF47113">
    <property type="entry name" value="Histone-fold"/>
    <property type="match status" value="1"/>
</dbReference>
<dbReference type="PROSITE" id="PS00322">
    <property type="entry name" value="HISTONE_H3_1"/>
    <property type="match status" value="1"/>
</dbReference>
<dbReference type="PROSITE" id="PS00959">
    <property type="entry name" value="HISTONE_H3_2"/>
    <property type="match status" value="1"/>
</dbReference>
<comment type="function">
    <text>Variant histone H3 which replaces conventional H3 in a wide range of nucleosomes in active genes. Constitutes the predominant form of histone H3 in non-dividing cells and is incorporated into chromatin independently of DNA synthesis. Deposited at sites of nucleosomal displacement throughout transcribed genes, suggesting that it represents an epigenetic imprint of transcriptionally active chromatin. Nucleosomes wrap and compact DNA into chromatin, limiting DNA accessibility to the cellular machineries which require DNA as a template. Histones thereby play a central role in transcription regulation, DNA repair, DNA replication and chromosomal stability. DNA accessibility is regulated via a complex set of post-translational modifications of histones, also called histone code, and nucleosome remodeling.</text>
</comment>
<comment type="subunit">
    <text>The nucleosome is a histone octamer containing two molecules each of H2A, H2B, H3 and H4 assembled in one H3-H4 heterotetramer and two H2A-H2B heterodimers. The octamer wraps approximately 147 bp of DNA.</text>
</comment>
<comment type="subcellular location">
    <subcellularLocation>
        <location>Nucleus</location>
    </subcellularLocation>
    <subcellularLocation>
        <location>Chromosome</location>
    </subcellularLocation>
</comment>
<comment type="PTM">
    <text>Acetylation is generally linked to gene activation. Acetylated to form H3K9ac (2%), H3K14 (37%), H3K18 (25%) and H3K23 (9%). Pre-existing H3K9me or H3K27me limit the possibility for histone acetylation. H3.2 shows a much higher level of steady-state acetylation than H3.1. Increased multiacetylation after exposure to NaCl.</text>
</comment>
<comment type="PTM">
    <text evidence="3">24% of H3K4 is found under the form of H3K4me1, 6% of H3K4me2 and 19% of H3K4me3. When not under the form of H3K9ac, H3K9 is found as H3K9me1 (43%), H3K9me2 (9%) or H3K9me3 (15%). When not acetylated, H3K14, H3K18 and H3K23 are only under the form of H3K14me3 (18%), H3K18me3 (16%), and H3K23me3 (33%). 31% of H3K27 is found under the form of H3K27me1, 24% of H3K27me2 and 38% of H3K27me3.</text>
</comment>
<comment type="PTM">
    <text evidence="1">Can be phosphorylated to form H3S10ph, H3T11ph and H3S28ph (By similarity). No phosphorylation detected during salt stress.</text>
</comment>
<comment type="PTM">
    <text>No modifications detected on H3K36 and H3K37.</text>
</comment>
<comment type="similarity">
    <text evidence="4">Belongs to the histone H3 family.</text>
</comment>
<comment type="caution">
    <text evidence="4">To ensure consistency between histone entries, we follow the 'Brno' nomenclature for histone modifications, with positions referring to those used in the literature for the 'closest' model organism. Due to slight variations in histone sequences between organisms and to the presence of initiator methionine in UniProtKB/Swiss-Prot sequences, the actual positions of modified amino acids in the sequence generally differ. In this entry the following conventions are used: H3K4me1/2/3 = mono-, di- and trimethylated Lys-5; H3K9ac = acetylated Lys-10; H3K9me1/2/3 = mono-, di- and trimethylated Lys-10; H3S10ph = phosphorylated Ser-11; H3T11ph = phosphorylated Thr-12; H3K14ac = acetylated Lys-15; H3K14me3 = trimethylated Lys-15; H3K18ac = acetylated Lys-19; H3K18me3 = trimethylated Lys-19; H3K23ac = acetylated Lys-24; H3K23me3 = trimethylated Lys-24; H3K27me1/2/3 = mono-, di- and trimethylated Lys-28; H3S28ph = phosphorylated Ser-29; H3K36 = Lys-37; H3K37 = Lys-38.</text>
</comment>
<organism>
    <name type="scientific">Medicago sativa</name>
    <name type="common">Alfalfa</name>
    <dbReference type="NCBI Taxonomy" id="3879"/>
    <lineage>
        <taxon>Eukaryota</taxon>
        <taxon>Viridiplantae</taxon>
        <taxon>Streptophyta</taxon>
        <taxon>Embryophyta</taxon>
        <taxon>Tracheophyta</taxon>
        <taxon>Spermatophyta</taxon>
        <taxon>Magnoliopsida</taxon>
        <taxon>eudicotyledons</taxon>
        <taxon>Gunneridae</taxon>
        <taxon>Pentapetalae</taxon>
        <taxon>rosids</taxon>
        <taxon>fabids</taxon>
        <taxon>Fabales</taxon>
        <taxon>Fabaceae</taxon>
        <taxon>Papilionoideae</taxon>
        <taxon>50 kb inversion clade</taxon>
        <taxon>NPAAA clade</taxon>
        <taxon>Hologalegina</taxon>
        <taxon>IRL clade</taxon>
        <taxon>Trifolieae</taxon>
        <taxon>Medicago</taxon>
    </lineage>
</organism>